<name>RISB_CLOPS</name>
<sequence length="153" mass="16325">MRILEGNLIGQDKKFAIVAGRFNEFIVSKLIGGALDAFKRHGVEEENIDLAWVPGAFEIPLIAKKLAKSGKYAGVVCLGTVIRGATSHYDYVCGEVSKGIANVSLDTEVPVIFGIVTTENIEQAIERAGTKAGNKGFDAAMAAIEMANLLENI</sequence>
<gene>
    <name evidence="1" type="primary">ribH</name>
    <name type="ordered locus">CPR_0533</name>
</gene>
<keyword id="KW-0686">Riboflavin biosynthesis</keyword>
<keyword id="KW-0808">Transferase</keyword>
<comment type="function">
    <text evidence="1">Catalyzes the formation of 6,7-dimethyl-8-ribityllumazine by condensation of 5-amino-6-(D-ribitylamino)uracil with 3,4-dihydroxy-2-butanone 4-phosphate. This is the penultimate step in the biosynthesis of riboflavin.</text>
</comment>
<comment type="catalytic activity">
    <reaction evidence="1">
        <text>(2S)-2-hydroxy-3-oxobutyl phosphate + 5-amino-6-(D-ribitylamino)uracil = 6,7-dimethyl-8-(1-D-ribityl)lumazine + phosphate + 2 H2O + H(+)</text>
        <dbReference type="Rhea" id="RHEA:26152"/>
        <dbReference type="ChEBI" id="CHEBI:15377"/>
        <dbReference type="ChEBI" id="CHEBI:15378"/>
        <dbReference type="ChEBI" id="CHEBI:15934"/>
        <dbReference type="ChEBI" id="CHEBI:43474"/>
        <dbReference type="ChEBI" id="CHEBI:58201"/>
        <dbReference type="ChEBI" id="CHEBI:58830"/>
        <dbReference type="EC" id="2.5.1.78"/>
    </reaction>
</comment>
<comment type="pathway">
    <text evidence="1">Cofactor biosynthesis; riboflavin biosynthesis; riboflavin from 2-hydroxy-3-oxobutyl phosphate and 5-amino-6-(D-ribitylamino)uracil: step 1/2.</text>
</comment>
<comment type="similarity">
    <text evidence="1">Belongs to the DMRL synthase family.</text>
</comment>
<accession>Q0SVI9</accession>
<protein>
    <recommendedName>
        <fullName evidence="1">6,7-dimethyl-8-ribityllumazine synthase</fullName>
        <shortName evidence="1">DMRL synthase</shortName>
        <shortName evidence="1">LS</shortName>
        <shortName evidence="1">Lumazine synthase</shortName>
        <ecNumber evidence="1">2.5.1.78</ecNumber>
    </recommendedName>
</protein>
<proteinExistence type="inferred from homology"/>
<feature type="chain" id="PRO_1000040407" description="6,7-dimethyl-8-ribityllumazine synthase">
    <location>
        <begin position="1"/>
        <end position="153"/>
    </location>
</feature>
<feature type="active site" description="Proton donor" evidence="1">
    <location>
        <position position="88"/>
    </location>
</feature>
<feature type="binding site" evidence="1">
    <location>
        <position position="22"/>
    </location>
    <ligand>
        <name>5-amino-6-(D-ribitylamino)uracil</name>
        <dbReference type="ChEBI" id="CHEBI:15934"/>
    </ligand>
</feature>
<feature type="binding site" evidence="1">
    <location>
        <begin position="56"/>
        <end position="58"/>
    </location>
    <ligand>
        <name>5-amino-6-(D-ribitylamino)uracil</name>
        <dbReference type="ChEBI" id="CHEBI:15934"/>
    </ligand>
</feature>
<feature type="binding site" evidence="1">
    <location>
        <begin position="80"/>
        <end position="82"/>
    </location>
    <ligand>
        <name>5-amino-6-(D-ribitylamino)uracil</name>
        <dbReference type="ChEBI" id="CHEBI:15934"/>
    </ligand>
</feature>
<feature type="binding site" evidence="1">
    <location>
        <begin position="85"/>
        <end position="86"/>
    </location>
    <ligand>
        <name>(2S)-2-hydroxy-3-oxobutyl phosphate</name>
        <dbReference type="ChEBI" id="CHEBI:58830"/>
    </ligand>
</feature>
<feature type="binding site" evidence="1">
    <location>
        <position position="113"/>
    </location>
    <ligand>
        <name>5-amino-6-(D-ribitylamino)uracil</name>
        <dbReference type="ChEBI" id="CHEBI:15934"/>
    </ligand>
</feature>
<feature type="binding site" evidence="1">
    <location>
        <position position="127"/>
    </location>
    <ligand>
        <name>(2S)-2-hydroxy-3-oxobutyl phosphate</name>
        <dbReference type="ChEBI" id="CHEBI:58830"/>
    </ligand>
</feature>
<dbReference type="EC" id="2.5.1.78" evidence="1"/>
<dbReference type="EMBL" id="CP000312">
    <property type="protein sequence ID" value="ABG86426.1"/>
    <property type="molecule type" value="Genomic_DNA"/>
</dbReference>
<dbReference type="RefSeq" id="WP_003469207.1">
    <property type="nucleotide sequence ID" value="NC_008262.1"/>
</dbReference>
<dbReference type="SMR" id="Q0SVI9"/>
<dbReference type="KEGG" id="cpr:CPR_0533"/>
<dbReference type="UniPathway" id="UPA00275">
    <property type="reaction ID" value="UER00404"/>
</dbReference>
<dbReference type="Proteomes" id="UP000001824">
    <property type="component" value="Chromosome"/>
</dbReference>
<dbReference type="GO" id="GO:0005829">
    <property type="term" value="C:cytosol"/>
    <property type="evidence" value="ECO:0007669"/>
    <property type="project" value="TreeGrafter"/>
</dbReference>
<dbReference type="GO" id="GO:0009349">
    <property type="term" value="C:riboflavin synthase complex"/>
    <property type="evidence" value="ECO:0007669"/>
    <property type="project" value="InterPro"/>
</dbReference>
<dbReference type="GO" id="GO:0000906">
    <property type="term" value="F:6,7-dimethyl-8-ribityllumazine synthase activity"/>
    <property type="evidence" value="ECO:0007669"/>
    <property type="project" value="UniProtKB-UniRule"/>
</dbReference>
<dbReference type="GO" id="GO:0009231">
    <property type="term" value="P:riboflavin biosynthetic process"/>
    <property type="evidence" value="ECO:0007669"/>
    <property type="project" value="UniProtKB-UniRule"/>
</dbReference>
<dbReference type="CDD" id="cd09209">
    <property type="entry name" value="Lumazine_synthase-I"/>
    <property type="match status" value="1"/>
</dbReference>
<dbReference type="FunFam" id="3.40.50.960:FF:000001">
    <property type="entry name" value="6,7-dimethyl-8-ribityllumazine synthase"/>
    <property type="match status" value="1"/>
</dbReference>
<dbReference type="Gene3D" id="3.40.50.960">
    <property type="entry name" value="Lumazine/riboflavin synthase"/>
    <property type="match status" value="1"/>
</dbReference>
<dbReference type="HAMAP" id="MF_00178">
    <property type="entry name" value="Lumazine_synth"/>
    <property type="match status" value="1"/>
</dbReference>
<dbReference type="InterPro" id="IPR034964">
    <property type="entry name" value="LS"/>
</dbReference>
<dbReference type="InterPro" id="IPR002180">
    <property type="entry name" value="LS/RS"/>
</dbReference>
<dbReference type="InterPro" id="IPR036467">
    <property type="entry name" value="LS/RS_sf"/>
</dbReference>
<dbReference type="NCBIfam" id="TIGR00114">
    <property type="entry name" value="lumazine-synth"/>
    <property type="match status" value="1"/>
</dbReference>
<dbReference type="NCBIfam" id="NF000812">
    <property type="entry name" value="PRK00061.1-4"/>
    <property type="match status" value="1"/>
</dbReference>
<dbReference type="PANTHER" id="PTHR21058:SF0">
    <property type="entry name" value="6,7-DIMETHYL-8-RIBITYLLUMAZINE SYNTHASE"/>
    <property type="match status" value="1"/>
</dbReference>
<dbReference type="PANTHER" id="PTHR21058">
    <property type="entry name" value="6,7-DIMETHYL-8-RIBITYLLUMAZINE SYNTHASE DMRL SYNTHASE LUMAZINE SYNTHASE"/>
    <property type="match status" value="1"/>
</dbReference>
<dbReference type="Pfam" id="PF00885">
    <property type="entry name" value="DMRL_synthase"/>
    <property type="match status" value="1"/>
</dbReference>
<dbReference type="SUPFAM" id="SSF52121">
    <property type="entry name" value="Lumazine synthase"/>
    <property type="match status" value="1"/>
</dbReference>
<reference key="1">
    <citation type="journal article" date="2006" name="Genome Res.">
        <title>Skewed genomic variability in strains of the toxigenic bacterial pathogen, Clostridium perfringens.</title>
        <authorList>
            <person name="Myers G.S.A."/>
            <person name="Rasko D.A."/>
            <person name="Cheung J.K."/>
            <person name="Ravel J."/>
            <person name="Seshadri R."/>
            <person name="DeBoy R.T."/>
            <person name="Ren Q."/>
            <person name="Varga J."/>
            <person name="Awad M.M."/>
            <person name="Brinkac L.M."/>
            <person name="Daugherty S.C."/>
            <person name="Haft D.H."/>
            <person name="Dodson R.J."/>
            <person name="Madupu R."/>
            <person name="Nelson W.C."/>
            <person name="Rosovitz M.J."/>
            <person name="Sullivan S.A."/>
            <person name="Khouri H."/>
            <person name="Dimitrov G.I."/>
            <person name="Watkins K.L."/>
            <person name="Mulligan S."/>
            <person name="Benton J."/>
            <person name="Radune D."/>
            <person name="Fisher D.J."/>
            <person name="Atkins H.S."/>
            <person name="Hiscox T."/>
            <person name="Jost B.H."/>
            <person name="Billington S.J."/>
            <person name="Songer J.G."/>
            <person name="McClane B.A."/>
            <person name="Titball R.W."/>
            <person name="Rood J.I."/>
            <person name="Melville S.B."/>
            <person name="Paulsen I.T."/>
        </authorList>
    </citation>
    <scope>NUCLEOTIDE SEQUENCE [LARGE SCALE GENOMIC DNA]</scope>
    <source>
        <strain>SM101 / Type A</strain>
    </source>
</reference>
<evidence type="ECO:0000255" key="1">
    <source>
        <dbReference type="HAMAP-Rule" id="MF_00178"/>
    </source>
</evidence>
<organism>
    <name type="scientific">Clostridium perfringens (strain SM101 / Type A)</name>
    <dbReference type="NCBI Taxonomy" id="289380"/>
    <lineage>
        <taxon>Bacteria</taxon>
        <taxon>Bacillati</taxon>
        <taxon>Bacillota</taxon>
        <taxon>Clostridia</taxon>
        <taxon>Eubacteriales</taxon>
        <taxon>Clostridiaceae</taxon>
        <taxon>Clostridium</taxon>
    </lineage>
</organism>